<reference key="1">
    <citation type="submission" date="2006-08" db="EMBL/GenBank/DDBJ databases">
        <title>Complete sequence of Shewanella frigidimarina NCIMB 400.</title>
        <authorList>
            <consortium name="US DOE Joint Genome Institute"/>
            <person name="Copeland A."/>
            <person name="Lucas S."/>
            <person name="Lapidus A."/>
            <person name="Barry K."/>
            <person name="Detter J.C."/>
            <person name="Glavina del Rio T."/>
            <person name="Hammon N."/>
            <person name="Israni S."/>
            <person name="Dalin E."/>
            <person name="Tice H."/>
            <person name="Pitluck S."/>
            <person name="Fredrickson J.K."/>
            <person name="Kolker E."/>
            <person name="McCuel L.A."/>
            <person name="DiChristina T."/>
            <person name="Nealson K.H."/>
            <person name="Newman D."/>
            <person name="Tiedje J.M."/>
            <person name="Zhou J."/>
            <person name="Romine M.F."/>
            <person name="Culley D.E."/>
            <person name="Serres M."/>
            <person name="Chertkov O."/>
            <person name="Brettin T."/>
            <person name="Bruce D."/>
            <person name="Han C."/>
            <person name="Tapia R."/>
            <person name="Gilna P."/>
            <person name="Schmutz J."/>
            <person name="Larimer F."/>
            <person name="Land M."/>
            <person name="Hauser L."/>
            <person name="Kyrpides N."/>
            <person name="Mikhailova N."/>
            <person name="Richardson P."/>
        </authorList>
    </citation>
    <scope>NUCLEOTIDE SEQUENCE [LARGE SCALE GENOMIC DNA]</scope>
    <source>
        <strain>NCIMB 400</strain>
    </source>
</reference>
<gene>
    <name evidence="1" type="primary">cyoE2</name>
    <name type="ordered locus">Sfri_0250</name>
</gene>
<dbReference type="EC" id="2.5.1.141" evidence="1"/>
<dbReference type="EMBL" id="CP000447">
    <property type="protein sequence ID" value="ABI70113.1"/>
    <property type="molecule type" value="Genomic_DNA"/>
</dbReference>
<dbReference type="SMR" id="Q089F2"/>
<dbReference type="STRING" id="318167.Sfri_0250"/>
<dbReference type="KEGG" id="sfr:Sfri_0250"/>
<dbReference type="eggNOG" id="COG0109">
    <property type="taxonomic scope" value="Bacteria"/>
</dbReference>
<dbReference type="HOGENOM" id="CLU_029631_0_2_6"/>
<dbReference type="OrthoDB" id="9814417at2"/>
<dbReference type="UniPathway" id="UPA00834">
    <property type="reaction ID" value="UER00712"/>
</dbReference>
<dbReference type="Proteomes" id="UP000000684">
    <property type="component" value="Chromosome"/>
</dbReference>
<dbReference type="GO" id="GO:0005886">
    <property type="term" value="C:plasma membrane"/>
    <property type="evidence" value="ECO:0007669"/>
    <property type="project" value="UniProtKB-SubCell"/>
</dbReference>
<dbReference type="GO" id="GO:0008495">
    <property type="term" value="F:protoheme IX farnesyltransferase activity"/>
    <property type="evidence" value="ECO:0007669"/>
    <property type="project" value="UniProtKB-UniRule"/>
</dbReference>
<dbReference type="GO" id="GO:0048034">
    <property type="term" value="P:heme O biosynthetic process"/>
    <property type="evidence" value="ECO:0007669"/>
    <property type="project" value="UniProtKB-UniRule"/>
</dbReference>
<dbReference type="CDD" id="cd13957">
    <property type="entry name" value="PT_UbiA_Cox10"/>
    <property type="match status" value="1"/>
</dbReference>
<dbReference type="FunFam" id="1.10.357.140:FF:000001">
    <property type="entry name" value="Protoheme IX farnesyltransferase"/>
    <property type="match status" value="1"/>
</dbReference>
<dbReference type="Gene3D" id="1.10.357.140">
    <property type="entry name" value="UbiA prenyltransferase"/>
    <property type="match status" value="1"/>
</dbReference>
<dbReference type="HAMAP" id="MF_00154">
    <property type="entry name" value="CyoE_CtaB"/>
    <property type="match status" value="1"/>
</dbReference>
<dbReference type="InterPro" id="IPR006369">
    <property type="entry name" value="Protohaem_IX_farnesylTrfase"/>
</dbReference>
<dbReference type="InterPro" id="IPR000537">
    <property type="entry name" value="UbiA_prenyltransferase"/>
</dbReference>
<dbReference type="InterPro" id="IPR030470">
    <property type="entry name" value="UbiA_prenylTrfase_CS"/>
</dbReference>
<dbReference type="InterPro" id="IPR044878">
    <property type="entry name" value="UbiA_sf"/>
</dbReference>
<dbReference type="NCBIfam" id="TIGR01473">
    <property type="entry name" value="cyoE_ctaB"/>
    <property type="match status" value="1"/>
</dbReference>
<dbReference type="NCBIfam" id="NF003349">
    <property type="entry name" value="PRK04375.1-2"/>
    <property type="match status" value="1"/>
</dbReference>
<dbReference type="PANTHER" id="PTHR43448:SF7">
    <property type="entry name" value="4-HYDROXYBENZOATE SOLANESYLTRANSFERASE"/>
    <property type="match status" value="1"/>
</dbReference>
<dbReference type="PANTHER" id="PTHR43448">
    <property type="entry name" value="PROTOHEME IX FARNESYLTRANSFERASE, MITOCHONDRIAL"/>
    <property type="match status" value="1"/>
</dbReference>
<dbReference type="Pfam" id="PF01040">
    <property type="entry name" value="UbiA"/>
    <property type="match status" value="1"/>
</dbReference>
<dbReference type="PROSITE" id="PS00943">
    <property type="entry name" value="UBIA"/>
    <property type="match status" value="1"/>
</dbReference>
<comment type="function">
    <text evidence="1">Converts heme B (protoheme IX) to heme O by substitution of the vinyl group on carbon 2 of heme B porphyrin ring with a hydroxyethyl farnesyl side group.</text>
</comment>
<comment type="catalytic activity">
    <reaction evidence="1">
        <text>heme b + (2E,6E)-farnesyl diphosphate + H2O = Fe(II)-heme o + diphosphate</text>
        <dbReference type="Rhea" id="RHEA:28070"/>
        <dbReference type="ChEBI" id="CHEBI:15377"/>
        <dbReference type="ChEBI" id="CHEBI:33019"/>
        <dbReference type="ChEBI" id="CHEBI:60344"/>
        <dbReference type="ChEBI" id="CHEBI:60530"/>
        <dbReference type="ChEBI" id="CHEBI:175763"/>
        <dbReference type="EC" id="2.5.1.141"/>
    </reaction>
</comment>
<comment type="pathway">
    <text evidence="1">Porphyrin-containing compound metabolism; heme O biosynthesis; heme O from protoheme: step 1/1.</text>
</comment>
<comment type="subcellular location">
    <subcellularLocation>
        <location evidence="1">Cell inner membrane</location>
        <topology evidence="1">Multi-pass membrane protein</topology>
    </subcellularLocation>
</comment>
<comment type="miscellaneous">
    <text evidence="1">Carbon 2 of the heme B porphyrin ring is defined according to the Fischer nomenclature.</text>
</comment>
<comment type="similarity">
    <text evidence="1">Belongs to the UbiA prenyltransferase family. Protoheme IX farnesyltransferase subfamily.</text>
</comment>
<evidence type="ECO:0000255" key="1">
    <source>
        <dbReference type="HAMAP-Rule" id="MF_00154"/>
    </source>
</evidence>
<keyword id="KW-0997">Cell inner membrane</keyword>
<keyword id="KW-1003">Cell membrane</keyword>
<keyword id="KW-0350">Heme biosynthesis</keyword>
<keyword id="KW-0472">Membrane</keyword>
<keyword id="KW-1185">Reference proteome</keyword>
<keyword id="KW-0808">Transferase</keyword>
<keyword id="KW-0812">Transmembrane</keyword>
<keyword id="KW-1133">Transmembrane helix</keyword>
<sequence>MTKPLTISQVQPKITLQWRAYFEMTKPKVVALMLLTVLVGMCLSVPGIVPLQPLVAGMAGIAMMAGSAAAFNHLIDRKIDGLMARTYNRPLPKGKISTTKAVTFAVSLGSLGFVVLYTLVNPLTAWLTFASLIGYALVYTAYLKRATSQNIVIGGLAGAMPPLLGWTAITNELHGYALLLVIIIFTWTPPHFWALAIHRRKEYAKVDIPMLPVTHGVEFTKTCILLYTILLAIACLLPVLVGMCGPIYLVGSTVLSCGFIYKAWQLKFHDYPELSMQVFKFSIYHLMVLFIVLLVDHYFWVNA</sequence>
<protein>
    <recommendedName>
        <fullName evidence="1">Protoheme IX farnesyltransferase 2</fullName>
        <ecNumber evidence="1">2.5.1.141</ecNumber>
    </recommendedName>
    <alternativeName>
        <fullName evidence="1">Heme B farnesyltransferase 2</fullName>
    </alternativeName>
    <alternativeName>
        <fullName evidence="1">Heme O synthase 2</fullName>
    </alternativeName>
</protein>
<feature type="chain" id="PRO_0000326946" description="Protoheme IX farnesyltransferase 2">
    <location>
        <begin position="1"/>
        <end position="303"/>
    </location>
</feature>
<feature type="transmembrane region" description="Helical" evidence="1">
    <location>
        <begin position="29"/>
        <end position="49"/>
    </location>
</feature>
<feature type="transmembrane region" description="Helical" evidence="1">
    <location>
        <begin position="51"/>
        <end position="71"/>
    </location>
</feature>
<feature type="transmembrane region" description="Helical" evidence="1">
    <location>
        <begin position="96"/>
        <end position="118"/>
    </location>
</feature>
<feature type="transmembrane region" description="Helical" evidence="1">
    <location>
        <begin position="123"/>
        <end position="143"/>
    </location>
</feature>
<feature type="transmembrane region" description="Helical" evidence="1">
    <location>
        <begin position="150"/>
        <end position="170"/>
    </location>
</feature>
<feature type="transmembrane region" description="Helical" evidence="1">
    <location>
        <begin position="177"/>
        <end position="197"/>
    </location>
</feature>
<feature type="transmembrane region" description="Helical" evidence="1">
    <location>
        <begin position="223"/>
        <end position="243"/>
    </location>
</feature>
<feature type="transmembrane region" description="Helical" evidence="1">
    <location>
        <begin position="244"/>
        <end position="264"/>
    </location>
</feature>
<feature type="transmembrane region" description="Helical" evidence="1">
    <location>
        <begin position="281"/>
        <end position="301"/>
    </location>
</feature>
<organism>
    <name type="scientific">Shewanella frigidimarina (strain NCIMB 400)</name>
    <dbReference type="NCBI Taxonomy" id="318167"/>
    <lineage>
        <taxon>Bacteria</taxon>
        <taxon>Pseudomonadati</taxon>
        <taxon>Pseudomonadota</taxon>
        <taxon>Gammaproteobacteria</taxon>
        <taxon>Alteromonadales</taxon>
        <taxon>Shewanellaceae</taxon>
        <taxon>Shewanella</taxon>
    </lineage>
</organism>
<name>CYOE2_SHEFN</name>
<proteinExistence type="inferred from homology"/>
<accession>Q089F2</accession>